<dbReference type="EMBL" id="AE009441">
    <property type="protein sequence ID" value="AAL65090.1"/>
    <property type="molecule type" value="Genomic_DNA"/>
</dbReference>
<dbReference type="RefSeq" id="WP_011009557.1">
    <property type="nucleotide sequence ID" value="NC_003364.1"/>
</dbReference>
<dbReference type="STRING" id="178306.PAE3680"/>
<dbReference type="EnsemblBacteria" id="AAL65090">
    <property type="protein sequence ID" value="AAL65090"/>
    <property type="gene ID" value="PAE3680"/>
</dbReference>
<dbReference type="GeneID" id="1466226"/>
<dbReference type="KEGG" id="pai:PAE3680"/>
<dbReference type="PATRIC" id="fig|178306.9.peg.2775"/>
<dbReference type="eggNOG" id="arCOG00969">
    <property type="taxonomic scope" value="Archaea"/>
</dbReference>
<dbReference type="HOGENOM" id="CLU_079268_0_0_2"/>
<dbReference type="InParanoid" id="Q8ZSM3"/>
<dbReference type="Proteomes" id="UP000002439">
    <property type="component" value="Chromosome"/>
</dbReference>
<dbReference type="GO" id="GO:0016787">
    <property type="term" value="F:hydrolase activity"/>
    <property type="evidence" value="ECO:0000318"/>
    <property type="project" value="GO_Central"/>
</dbReference>
<dbReference type="Gene3D" id="3.60.15.10">
    <property type="entry name" value="Ribonuclease Z/Hydroxyacylglutathione hydrolase-like"/>
    <property type="match status" value="1"/>
</dbReference>
<dbReference type="HAMAP" id="MF_01406">
    <property type="entry name" value="UPF0282"/>
    <property type="match status" value="1"/>
</dbReference>
<dbReference type="InterPro" id="IPR036866">
    <property type="entry name" value="RibonucZ/Hydroxyglut_hydro"/>
</dbReference>
<dbReference type="InterPro" id="IPR050114">
    <property type="entry name" value="UPF0173_UPF0282_UlaG_hydrolase"/>
</dbReference>
<dbReference type="InterPro" id="IPR014426">
    <property type="entry name" value="UPF0282_hydrls"/>
</dbReference>
<dbReference type="PANTHER" id="PTHR43546">
    <property type="entry name" value="UPF0173 METAL-DEPENDENT HYDROLASE MJ1163-RELATED"/>
    <property type="match status" value="1"/>
</dbReference>
<dbReference type="PANTHER" id="PTHR43546:SF4">
    <property type="entry name" value="UPF0282 PROTEIN MJ1629"/>
    <property type="match status" value="1"/>
</dbReference>
<dbReference type="Pfam" id="PF13483">
    <property type="entry name" value="Lactamase_B_3"/>
    <property type="match status" value="1"/>
</dbReference>
<dbReference type="PIRSF" id="PIRSF004944">
    <property type="entry name" value="UCP004944_hydrls"/>
    <property type="match status" value="1"/>
</dbReference>
<dbReference type="SUPFAM" id="SSF56281">
    <property type="entry name" value="Metallo-hydrolase/oxidoreductase"/>
    <property type="match status" value="1"/>
</dbReference>
<accession>Q8ZSM3</accession>
<name>Y3680_PYRAE</name>
<sequence length="303" mass="33871">MEILPVGEESLGVRSMCLYVETRDVRILFDAGVSLAPRRFGLPPHPRELERARAVRSEILRLAAAADVITVSHYHRDHFTPWYPSVYMATDGETYRQIYGGKRVLLKSPDDLNWSQRRRHYGLSKALGDAGAELIYADGGEWRVGGTVIKASQSLWHGPAGSKTGRVVAFAVLDGEERLAFVPDVEGPVEPEPVAFLKEVRPTIAVVGGPPTYLPWDIEAAIRHLREVVDLAPRVLVVAHHALRSGDWREKLAPLFEYAEKRGVEIATYASLRGVGEELLEASRKELYKREPAEALVFEEEEE</sequence>
<proteinExistence type="inferred from homology"/>
<gene>
    <name type="ordered locus">PAE3680</name>
</gene>
<organism>
    <name type="scientific">Pyrobaculum aerophilum (strain ATCC 51768 / DSM 7523 / JCM 9630 / CIP 104966 / NBRC 100827 / IM2)</name>
    <dbReference type="NCBI Taxonomy" id="178306"/>
    <lineage>
        <taxon>Archaea</taxon>
        <taxon>Thermoproteota</taxon>
        <taxon>Thermoprotei</taxon>
        <taxon>Thermoproteales</taxon>
        <taxon>Thermoproteaceae</taxon>
        <taxon>Pyrobaculum</taxon>
    </lineage>
</organism>
<keyword id="KW-1185">Reference proteome</keyword>
<feature type="chain" id="PRO_0000057635" description="UPF0282 protein PAE3680">
    <location>
        <begin position="1"/>
        <end position="303"/>
    </location>
</feature>
<evidence type="ECO:0000255" key="1">
    <source>
        <dbReference type="HAMAP-Rule" id="MF_01406"/>
    </source>
</evidence>
<reference key="1">
    <citation type="journal article" date="2002" name="Proc. Natl. Acad. Sci. U.S.A.">
        <title>Genome sequence of the hyperthermophilic crenarchaeon Pyrobaculum aerophilum.</title>
        <authorList>
            <person name="Fitz-Gibbon S.T."/>
            <person name="Ladner H."/>
            <person name="Kim U.-J."/>
            <person name="Stetter K.O."/>
            <person name="Simon M.I."/>
            <person name="Miller J.H."/>
        </authorList>
    </citation>
    <scope>NUCLEOTIDE SEQUENCE [LARGE SCALE GENOMIC DNA]</scope>
    <source>
        <strain>ATCC 51768 / DSM 7523 / JCM 9630 / CIP 104966 / NBRC 100827 / IM2</strain>
    </source>
</reference>
<comment type="similarity">
    <text evidence="1">Belongs to the UPF0282 family.</text>
</comment>
<protein>
    <recommendedName>
        <fullName evidence="1">UPF0282 protein PAE3680</fullName>
    </recommendedName>
</protein>